<keyword id="KW-0343">GTPase activation</keyword>
<keyword id="KW-1185">Reference proteome</keyword>
<sequence length="757" mass="87694">MPVDKQAKRKKSISSNEVELLYTKSKTYLHPTTSKKDNIPGYLSLSRGANAANRDIIISFMSEKQLSSEELKAYENVDIADLQDDLEALKLGGTNSRSSGKRNLNIVSKPPTSSAFGFCFSIPISFVYSIQVRKPSVGWWFGSIIINTQDGEKLPIVFFHDDESPSTLKNQKVRNQRFDPFGDNGEMYWGGSDFMNALGKFADVQKSSVEPSVYLINPESNDLRNFAPFKEPKTAKTETNQEPFKLPDVNKFFANAKWKVLETVATFSAKTRNQVLDLVDENAPMPIKQIINKPEVQKIGNEFDSARVYLAKWAAQVKEEAEEAHRKYQLDDEIYNKINKELGVGSNTEILTDEEVSKTSRRKPISKVEWEGLFDFSGRLIISIDEIKDRIFHGGLEDCIRGEAWLFLLNVYPWDSSAEERKTLRNSFQTAYEEIKLKWVNDDDKRSVDFWKDQKHRIEKDINRTDRNLSIFQNKKKISISGVGSDRLPTTRESSPETPDEADDDEFDVSNITNPHLFKMREILLTYNEHNVNLGYVQGMTDLLSPLYVTFQDESLTFWAFVNFMDRMERNFLRDQSGMKNQMLTLNELVQFMLPDLFKHLEKCESTDLYFFFRMLLVWFKREFEWSSVLSLWEILWTDYYSGQFHLFFALAVLSDNERIIRQNLSRFDEVLKYMNDLSMNMNLNHLLIRAELLFLRFRRMIDIIDRENSLKKLNNPGVYDDANNSLIKISPALRELLSKKPVIQKETERPEGVGGG</sequence>
<gene>
    <name type="primary">GYP7</name>
    <name type="ordered locus">DEHA2C13046g</name>
</gene>
<reference key="1">
    <citation type="journal article" date="2004" name="Nature">
        <title>Genome evolution in yeasts.</title>
        <authorList>
            <person name="Dujon B."/>
            <person name="Sherman D."/>
            <person name="Fischer G."/>
            <person name="Durrens P."/>
            <person name="Casaregola S."/>
            <person name="Lafontaine I."/>
            <person name="de Montigny J."/>
            <person name="Marck C."/>
            <person name="Neuveglise C."/>
            <person name="Talla E."/>
            <person name="Goffard N."/>
            <person name="Frangeul L."/>
            <person name="Aigle M."/>
            <person name="Anthouard V."/>
            <person name="Babour A."/>
            <person name="Barbe V."/>
            <person name="Barnay S."/>
            <person name="Blanchin S."/>
            <person name="Beckerich J.-M."/>
            <person name="Beyne E."/>
            <person name="Bleykasten C."/>
            <person name="Boisrame A."/>
            <person name="Boyer J."/>
            <person name="Cattolico L."/>
            <person name="Confanioleri F."/>
            <person name="de Daruvar A."/>
            <person name="Despons L."/>
            <person name="Fabre E."/>
            <person name="Fairhead C."/>
            <person name="Ferry-Dumazet H."/>
            <person name="Groppi A."/>
            <person name="Hantraye F."/>
            <person name="Hennequin C."/>
            <person name="Jauniaux N."/>
            <person name="Joyet P."/>
            <person name="Kachouri R."/>
            <person name="Kerrest A."/>
            <person name="Koszul R."/>
            <person name="Lemaire M."/>
            <person name="Lesur I."/>
            <person name="Ma L."/>
            <person name="Muller H."/>
            <person name="Nicaud J.-M."/>
            <person name="Nikolski M."/>
            <person name="Oztas S."/>
            <person name="Ozier-Kalogeropoulos O."/>
            <person name="Pellenz S."/>
            <person name="Potier S."/>
            <person name="Richard G.-F."/>
            <person name="Straub M.-L."/>
            <person name="Suleau A."/>
            <person name="Swennen D."/>
            <person name="Tekaia F."/>
            <person name="Wesolowski-Louvel M."/>
            <person name="Westhof E."/>
            <person name="Wirth B."/>
            <person name="Zeniou-Meyer M."/>
            <person name="Zivanovic Y."/>
            <person name="Bolotin-Fukuhara M."/>
            <person name="Thierry A."/>
            <person name="Bouchier C."/>
            <person name="Caudron B."/>
            <person name="Scarpelli C."/>
            <person name="Gaillardin C."/>
            <person name="Weissenbach J."/>
            <person name="Wincker P."/>
            <person name="Souciet J.-L."/>
        </authorList>
    </citation>
    <scope>NUCLEOTIDE SEQUENCE [LARGE SCALE GENOMIC DNA]</scope>
    <source>
        <strain>ATCC 36239 / CBS 767 / BCRC 21394 / JCM 1990 / NBRC 0083 / IGC 2968</strain>
    </source>
</reference>
<dbReference type="EMBL" id="CR382135">
    <property type="protein sequence ID" value="CAG86319.2"/>
    <property type="molecule type" value="Genomic_DNA"/>
</dbReference>
<dbReference type="RefSeq" id="XP_458243.2">
    <property type="nucleotide sequence ID" value="XM_458243.1"/>
</dbReference>
<dbReference type="SMR" id="Q6BU76"/>
<dbReference type="FunCoup" id="Q6BU76">
    <property type="interactions" value="76"/>
</dbReference>
<dbReference type="STRING" id="284592.Q6BU76"/>
<dbReference type="GeneID" id="2900078"/>
<dbReference type="KEGG" id="dha:DEHA2C13046g"/>
<dbReference type="VEuPathDB" id="FungiDB:DEHA2C13046g"/>
<dbReference type="eggNOG" id="KOG2197">
    <property type="taxonomic scope" value="Eukaryota"/>
</dbReference>
<dbReference type="HOGENOM" id="CLU_004457_0_1_1"/>
<dbReference type="InParanoid" id="Q6BU76"/>
<dbReference type="OMA" id="WWREQRG"/>
<dbReference type="OrthoDB" id="10264062at2759"/>
<dbReference type="Proteomes" id="UP000000599">
    <property type="component" value="Chromosome C"/>
</dbReference>
<dbReference type="GO" id="GO:0005770">
    <property type="term" value="C:late endosome"/>
    <property type="evidence" value="ECO:0007669"/>
    <property type="project" value="EnsemblFungi"/>
</dbReference>
<dbReference type="GO" id="GO:0005096">
    <property type="term" value="F:GTPase activator activity"/>
    <property type="evidence" value="ECO:0007669"/>
    <property type="project" value="UniProtKB-KW"/>
</dbReference>
<dbReference type="GO" id="GO:0032889">
    <property type="term" value="P:regulation of vacuole fusion, non-autophagic"/>
    <property type="evidence" value="ECO:0007669"/>
    <property type="project" value="EnsemblFungi"/>
</dbReference>
<dbReference type="GO" id="GO:0016192">
    <property type="term" value="P:vesicle-mediated transport"/>
    <property type="evidence" value="ECO:0007669"/>
    <property type="project" value="EnsemblFungi"/>
</dbReference>
<dbReference type="FunFam" id="1.10.472.80:FF:000005">
    <property type="entry name" value="TBC1 domain family member 15"/>
    <property type="match status" value="1"/>
</dbReference>
<dbReference type="Gene3D" id="1.10.8.270">
    <property type="entry name" value="putative rabgap domain of human tbc1 domain family member 14 like domains"/>
    <property type="match status" value="1"/>
</dbReference>
<dbReference type="Gene3D" id="1.10.472.80">
    <property type="entry name" value="Ypt/Rab-GAP domain of gyp1p, domain 3"/>
    <property type="match status" value="1"/>
</dbReference>
<dbReference type="InterPro" id="IPR000195">
    <property type="entry name" value="Rab-GAP-TBC_dom"/>
</dbReference>
<dbReference type="InterPro" id="IPR035969">
    <property type="entry name" value="Rab-GAP_TBC_sf"/>
</dbReference>
<dbReference type="PANTHER" id="PTHR22957:SF502">
    <property type="entry name" value="SMALL G PROTEIN SIGNALING MODULATOR 2-RELATED"/>
    <property type="match status" value="1"/>
</dbReference>
<dbReference type="PANTHER" id="PTHR22957">
    <property type="entry name" value="TBC1 DOMAIN FAMILY MEMBER GTPASE-ACTIVATING PROTEIN"/>
    <property type="match status" value="1"/>
</dbReference>
<dbReference type="Pfam" id="PF00566">
    <property type="entry name" value="RabGAP-TBC"/>
    <property type="match status" value="1"/>
</dbReference>
<dbReference type="SMART" id="SM00164">
    <property type="entry name" value="TBC"/>
    <property type="match status" value="1"/>
</dbReference>
<dbReference type="SUPFAM" id="SSF47923">
    <property type="entry name" value="Ypt/Rab-GAP domain of gyp1p"/>
    <property type="match status" value="2"/>
</dbReference>
<dbReference type="PROSITE" id="PS50086">
    <property type="entry name" value="TBC_RABGAP"/>
    <property type="match status" value="1"/>
</dbReference>
<feature type="chain" id="PRO_0000208015" description="GTPase-activating protein GYP7">
    <location>
        <begin position="1"/>
        <end position="757"/>
    </location>
</feature>
<feature type="domain" description="Rab-GAP TBC" evidence="2">
    <location>
        <begin position="395"/>
        <end position="640"/>
    </location>
</feature>
<feature type="region of interest" description="Disordered" evidence="3">
    <location>
        <begin position="482"/>
        <end position="507"/>
    </location>
</feature>
<feature type="compositionally biased region" description="Acidic residues" evidence="3">
    <location>
        <begin position="498"/>
        <end position="507"/>
    </location>
</feature>
<name>GYP7_DEBHA</name>
<organism>
    <name type="scientific">Debaryomyces hansenii (strain ATCC 36239 / CBS 767 / BCRC 21394 / JCM 1990 / NBRC 0083 / IGC 2968)</name>
    <name type="common">Yeast</name>
    <name type="synonym">Torulaspora hansenii</name>
    <dbReference type="NCBI Taxonomy" id="284592"/>
    <lineage>
        <taxon>Eukaryota</taxon>
        <taxon>Fungi</taxon>
        <taxon>Dikarya</taxon>
        <taxon>Ascomycota</taxon>
        <taxon>Saccharomycotina</taxon>
        <taxon>Pichiomycetes</taxon>
        <taxon>Debaryomycetaceae</taxon>
        <taxon>Debaryomyces</taxon>
    </lineage>
</organism>
<protein>
    <recommendedName>
        <fullName>GTPase-activating protein GYP7</fullName>
    </recommendedName>
    <alternativeName>
        <fullName>GAP for YPT7</fullName>
    </alternativeName>
</protein>
<proteinExistence type="inferred from homology"/>
<comment type="function">
    <text evidence="1">Most effectively accelerate the intrinsic GTPase activity of YPT7. It is also active, but to a lesser extent, on YPT31, YPT32 and YPT1. YPT6 and SEC4 (By similarity).</text>
</comment>
<accession>Q6BU76</accession>
<evidence type="ECO:0000250" key="1"/>
<evidence type="ECO:0000255" key="2">
    <source>
        <dbReference type="PROSITE-ProRule" id="PRU00163"/>
    </source>
</evidence>
<evidence type="ECO:0000256" key="3">
    <source>
        <dbReference type="SAM" id="MobiDB-lite"/>
    </source>
</evidence>